<evidence type="ECO:0000255" key="1">
    <source>
        <dbReference type="HAMAP-Rule" id="MF_00412"/>
    </source>
</evidence>
<name>PROA_SYNP6</name>
<dbReference type="EC" id="1.2.1.41" evidence="1"/>
<dbReference type="EMBL" id="AP008231">
    <property type="protein sequence ID" value="BAD80023.1"/>
    <property type="molecule type" value="Genomic_DNA"/>
</dbReference>
<dbReference type="RefSeq" id="WP_011244143.1">
    <property type="nucleotide sequence ID" value="NZ_CP085785.1"/>
</dbReference>
<dbReference type="SMR" id="Q5N0Z7"/>
<dbReference type="KEGG" id="syc:syc1833_c"/>
<dbReference type="eggNOG" id="COG0014">
    <property type="taxonomic scope" value="Bacteria"/>
</dbReference>
<dbReference type="UniPathway" id="UPA00098">
    <property type="reaction ID" value="UER00360"/>
</dbReference>
<dbReference type="Proteomes" id="UP000001175">
    <property type="component" value="Chromosome"/>
</dbReference>
<dbReference type="GO" id="GO:0005737">
    <property type="term" value="C:cytoplasm"/>
    <property type="evidence" value="ECO:0007669"/>
    <property type="project" value="UniProtKB-SubCell"/>
</dbReference>
<dbReference type="GO" id="GO:0004350">
    <property type="term" value="F:glutamate-5-semialdehyde dehydrogenase activity"/>
    <property type="evidence" value="ECO:0007669"/>
    <property type="project" value="UniProtKB-UniRule"/>
</dbReference>
<dbReference type="GO" id="GO:0050661">
    <property type="term" value="F:NADP binding"/>
    <property type="evidence" value="ECO:0007669"/>
    <property type="project" value="InterPro"/>
</dbReference>
<dbReference type="GO" id="GO:0055129">
    <property type="term" value="P:L-proline biosynthetic process"/>
    <property type="evidence" value="ECO:0007669"/>
    <property type="project" value="UniProtKB-UniRule"/>
</dbReference>
<dbReference type="CDD" id="cd07079">
    <property type="entry name" value="ALDH_F18-19_ProA-GPR"/>
    <property type="match status" value="1"/>
</dbReference>
<dbReference type="FunFam" id="3.40.309.10:FF:000006">
    <property type="entry name" value="Gamma-glutamyl phosphate reductase"/>
    <property type="match status" value="1"/>
</dbReference>
<dbReference type="Gene3D" id="3.40.605.10">
    <property type="entry name" value="Aldehyde Dehydrogenase, Chain A, domain 1"/>
    <property type="match status" value="1"/>
</dbReference>
<dbReference type="Gene3D" id="3.40.309.10">
    <property type="entry name" value="Aldehyde Dehydrogenase, Chain A, domain 2"/>
    <property type="match status" value="1"/>
</dbReference>
<dbReference type="HAMAP" id="MF_00412">
    <property type="entry name" value="ProA"/>
    <property type="match status" value="1"/>
</dbReference>
<dbReference type="InterPro" id="IPR016161">
    <property type="entry name" value="Ald_DH/histidinol_DH"/>
</dbReference>
<dbReference type="InterPro" id="IPR016163">
    <property type="entry name" value="Ald_DH_C"/>
</dbReference>
<dbReference type="InterPro" id="IPR016162">
    <property type="entry name" value="Ald_DH_N"/>
</dbReference>
<dbReference type="InterPro" id="IPR015590">
    <property type="entry name" value="Aldehyde_DH_dom"/>
</dbReference>
<dbReference type="InterPro" id="IPR020593">
    <property type="entry name" value="G-glutamylP_reductase_CS"/>
</dbReference>
<dbReference type="InterPro" id="IPR012134">
    <property type="entry name" value="Glu-5-SA_DH"/>
</dbReference>
<dbReference type="InterPro" id="IPR000965">
    <property type="entry name" value="GPR_dom"/>
</dbReference>
<dbReference type="NCBIfam" id="NF001221">
    <property type="entry name" value="PRK00197.1"/>
    <property type="match status" value="1"/>
</dbReference>
<dbReference type="NCBIfam" id="TIGR00407">
    <property type="entry name" value="proA"/>
    <property type="match status" value="1"/>
</dbReference>
<dbReference type="PANTHER" id="PTHR11063:SF8">
    <property type="entry name" value="DELTA-1-PYRROLINE-5-CARBOXYLATE SYNTHASE"/>
    <property type="match status" value="1"/>
</dbReference>
<dbReference type="PANTHER" id="PTHR11063">
    <property type="entry name" value="GLUTAMATE SEMIALDEHYDE DEHYDROGENASE"/>
    <property type="match status" value="1"/>
</dbReference>
<dbReference type="Pfam" id="PF00171">
    <property type="entry name" value="Aldedh"/>
    <property type="match status" value="1"/>
</dbReference>
<dbReference type="PIRSF" id="PIRSF000151">
    <property type="entry name" value="GPR"/>
    <property type="match status" value="1"/>
</dbReference>
<dbReference type="SUPFAM" id="SSF53720">
    <property type="entry name" value="ALDH-like"/>
    <property type="match status" value="1"/>
</dbReference>
<dbReference type="PROSITE" id="PS01223">
    <property type="entry name" value="PROA"/>
    <property type="match status" value="1"/>
</dbReference>
<keyword id="KW-0028">Amino-acid biosynthesis</keyword>
<keyword id="KW-0963">Cytoplasm</keyword>
<keyword id="KW-0521">NADP</keyword>
<keyword id="KW-0560">Oxidoreductase</keyword>
<keyword id="KW-0641">Proline biosynthesis</keyword>
<protein>
    <recommendedName>
        <fullName evidence="1">Gamma-glutamyl phosphate reductase</fullName>
        <shortName evidence="1">GPR</shortName>
        <ecNumber evidence="1">1.2.1.41</ecNumber>
    </recommendedName>
    <alternativeName>
        <fullName evidence="1">Glutamate-5-semialdehyde dehydrogenase</fullName>
    </alternativeName>
    <alternativeName>
        <fullName evidence="1">Glutamyl-gamma-semialdehyde dehydrogenase</fullName>
        <shortName evidence="1">GSA dehydrogenase</shortName>
    </alternativeName>
</protein>
<sequence>MATLSVDLEVQAQATRAAARQLAQWSGADRQRLLSAIATTLEQEAPRILAANQADCEAATTEGIAPALYARLKLDADKLAAAIAGVRDLAQLPDPLGQIQIDRELDEGLILQRLTCPVGVLGVIFEARPDAVIQIASLAIKSGNGAILKGGREAICSCQAIVAAIAQALAEQQAPVEAIRLLTSREETLALLKLDRYVDLIIPRGSNSFVRFVQDNTHIPVLGHADGICHLYVDQAAAIEKTVTITVDAKTQYPAACNAIETLLIHEAIAPQFLPVVAAALHEKGVSLRGDAAAQTIVPMEAATEEDWRTEYSDLVLAVRLVPSLDAAIAHINEYGSGHTDAIATEDAAAAAQFFSQVDSAGVYHNCSTRFADGFRYGFGAEVGISTQKLPPRGPVGLEGLVTYKYVLSGDGQIAATYSGAQAKPFLHRDR</sequence>
<feature type="chain" id="PRO_0000189799" description="Gamma-glutamyl phosphate reductase">
    <location>
        <begin position="1"/>
        <end position="431"/>
    </location>
</feature>
<proteinExistence type="inferred from homology"/>
<accession>Q5N0Z7</accession>
<comment type="function">
    <text evidence="1">Catalyzes the NADPH-dependent reduction of L-glutamate 5-phosphate into L-glutamate 5-semialdehyde and phosphate. The product spontaneously undergoes cyclization to form 1-pyrroline-5-carboxylate.</text>
</comment>
<comment type="catalytic activity">
    <reaction evidence="1">
        <text>L-glutamate 5-semialdehyde + phosphate + NADP(+) = L-glutamyl 5-phosphate + NADPH + H(+)</text>
        <dbReference type="Rhea" id="RHEA:19541"/>
        <dbReference type="ChEBI" id="CHEBI:15378"/>
        <dbReference type="ChEBI" id="CHEBI:43474"/>
        <dbReference type="ChEBI" id="CHEBI:57783"/>
        <dbReference type="ChEBI" id="CHEBI:58066"/>
        <dbReference type="ChEBI" id="CHEBI:58274"/>
        <dbReference type="ChEBI" id="CHEBI:58349"/>
        <dbReference type="EC" id="1.2.1.41"/>
    </reaction>
</comment>
<comment type="pathway">
    <text evidence="1">Amino-acid biosynthesis; L-proline biosynthesis; L-glutamate 5-semialdehyde from L-glutamate: step 2/2.</text>
</comment>
<comment type="subcellular location">
    <subcellularLocation>
        <location evidence="1">Cytoplasm</location>
    </subcellularLocation>
</comment>
<comment type="similarity">
    <text evidence="1">Belongs to the gamma-glutamyl phosphate reductase family.</text>
</comment>
<gene>
    <name evidence="1" type="primary">proA</name>
    <name type="ordered locus">syc1833_c</name>
</gene>
<organism>
    <name type="scientific">Synechococcus sp. (strain ATCC 27144 / PCC 6301 / SAUG 1402/1)</name>
    <name type="common">Anacystis nidulans</name>
    <dbReference type="NCBI Taxonomy" id="269084"/>
    <lineage>
        <taxon>Bacteria</taxon>
        <taxon>Bacillati</taxon>
        <taxon>Cyanobacteriota</taxon>
        <taxon>Cyanophyceae</taxon>
        <taxon>Synechococcales</taxon>
        <taxon>Synechococcaceae</taxon>
        <taxon>Synechococcus</taxon>
    </lineage>
</organism>
<reference key="1">
    <citation type="journal article" date="2007" name="Photosyn. Res.">
        <title>Complete nucleotide sequence of the freshwater unicellular cyanobacterium Synechococcus elongatus PCC 6301 chromosome: gene content and organization.</title>
        <authorList>
            <person name="Sugita C."/>
            <person name="Ogata K."/>
            <person name="Shikata M."/>
            <person name="Jikuya H."/>
            <person name="Takano J."/>
            <person name="Furumichi M."/>
            <person name="Kanehisa M."/>
            <person name="Omata T."/>
            <person name="Sugiura M."/>
            <person name="Sugita M."/>
        </authorList>
    </citation>
    <scope>NUCLEOTIDE SEQUENCE [LARGE SCALE GENOMIC DNA]</scope>
    <source>
        <strain>ATCC 27144 / PCC 6301 / SAUG 1402/1</strain>
    </source>
</reference>